<sequence>MIRWLLLMYLGITCQGVTDIHSRNLTNSLKVIYEWKYIDYDFGSDEKRQAAIQSGDYNYTMNYLLDTDQWGDKTFVIIMKFNGVPSSLNVITNKTGNGGPLLAPYPDWTWAKNENCSGITSAYKIEIDMCDRLWVLDSGLINNVRSVCPPQLLVFDLNTSQLLKQVKIPHDIAVNTTTEKGALVTLSVQLLSCEVNGSTLVYIGDNEGFALIIYNNSDNSFQRLTSSTFASDPRYTTFTINGESFTLQSGIFGMALSPLTQNLYYSALSSHNLNYVNTEQFVKSQYQANNVHYQGKENILWTQASAKGISDNGVLFFGLVGDTSLACWNENRLLDRRNIEVVAKNKETLQAITGLKVKRRISFILVHGFPLEYEYVLAVSNRIQKVIYGFDFNDVNFRILIANVNDLIKNTRCISP</sequence>
<keyword id="KW-0325">Glycoprotein</keyword>
<keyword id="KW-1185">Reference proteome</keyword>
<keyword id="KW-0964">Secreted</keyword>
<keyword id="KW-0732">Signal</keyword>
<proteinExistence type="evidence at protein level"/>
<organism evidence="12 13">
    <name type="scientific">Apis mellifera</name>
    <name type="common">Honeybee</name>
    <dbReference type="NCBI Taxonomy" id="7460"/>
    <lineage>
        <taxon>Eukaryota</taxon>
        <taxon>Metazoa</taxon>
        <taxon>Ecdysozoa</taxon>
        <taxon>Arthropoda</taxon>
        <taxon>Hexapoda</taxon>
        <taxon>Insecta</taxon>
        <taxon>Pterygota</taxon>
        <taxon>Neoptera</taxon>
        <taxon>Endopterygota</taxon>
        <taxon>Hymenoptera</taxon>
        <taxon>Apocrita</taxon>
        <taxon>Aculeata</taxon>
        <taxon>Apoidea</taxon>
        <taxon>Anthophila</taxon>
        <taxon>Apidae</taxon>
        <taxon>Apis</taxon>
    </lineage>
</organism>
<reference evidence="10" key="1">
    <citation type="journal article" date="2004" name="J. Insect Physiol.">
        <title>The MRJP/YELLOW protein family of Apis mellifera: identification of new members in the EST library.</title>
        <authorList>
            <person name="Albert S."/>
            <person name="Klaudiny J."/>
        </authorList>
    </citation>
    <scope>NUCLEOTIDE SEQUENCE [MRNA]</scope>
</reference>
<reference evidence="13" key="2">
    <citation type="journal article" date="2008" name="Toxicon">
        <title>Proteomic analysis of the honey bee worker venom gland focusing on the mechanisms of protection against tissue damage.</title>
        <authorList>
            <person name="Peiren N."/>
            <person name="de Graaf D.C."/>
            <person name="Vanrobaeys F."/>
            <person name="Danneels E.L."/>
            <person name="Devreese B."/>
            <person name="Van Beeumen J."/>
            <person name="Jacobs F.J."/>
        </authorList>
    </citation>
    <scope>NUCLEOTIDE SEQUENCE [MRNA]</scope>
    <scope>FUNCTION</scope>
    <scope>SUBCELLULAR LOCATION</scope>
    <scope>TISSUE SPECIFICITY</scope>
    <scope>IDENTIFICATION BY MASS SPECTROMETRY</scope>
</reference>
<reference evidence="13" key="3">
    <citation type="journal article" date="2014" name="Genet. Mol. Res.">
        <title>MRJP microsatellite markers in Africanized Apis mellifera colonies selected on the basis of royal jelly production.</title>
        <authorList>
            <person name="Parpinelli R.S."/>
            <person name="Ruvolo-Takasusuki M.C."/>
            <person name="Toledo V.A."/>
        </authorList>
    </citation>
    <scope>NUCLEOTIDE SEQUENCE [GENOMIC DNA]</scope>
</reference>
<reference evidence="13" key="4">
    <citation type="journal article" date="2006" name="Nature">
        <title>Insights into social insects from the genome of the honeybee Apis mellifera.</title>
        <authorList>
            <consortium name="Honeybee genome sequencing consortium"/>
        </authorList>
    </citation>
    <scope>NUCLEOTIDE SEQUENCE [LARGE SCALE GENOMIC DNA]</scope>
</reference>
<reference evidence="13" key="5">
    <citation type="journal article" date="2014" name="BMC Genomics">
        <title>Finding the missing honey bee genes: lessons learned from a genome upgrade.</title>
        <authorList>
            <consortium name="HGSC production teams"/>
            <consortium name="Honey Bee Genome Sequencing Consortium"/>
            <person name="Elsik C.G."/>
            <person name="Worley K.C."/>
            <person name="Bennett A.K."/>
            <person name="Beye M."/>
            <person name="Camara F."/>
            <person name="Childers C.P."/>
            <person name="de Graaf D.C."/>
            <person name="Debyser G."/>
            <person name="Deng J."/>
            <person name="Devreese B."/>
            <person name="Elhaik E."/>
            <person name="Evans J.D."/>
            <person name="Foster L.J."/>
            <person name="Graur D."/>
            <person name="Guigo R."/>
            <person name="Hoff K.J."/>
            <person name="Holder M.E."/>
            <person name="Hudson M.E."/>
            <person name="Hunt G.J."/>
            <person name="Jiang H."/>
            <person name="Joshi V."/>
            <person name="Khetani R.S."/>
            <person name="Kosarev P."/>
            <person name="Kovar C.L."/>
            <person name="Ma J."/>
            <person name="Maleszka R."/>
            <person name="Moritz R.F."/>
            <person name="Munoz-Torres M.C."/>
            <person name="Murphy T.D."/>
            <person name="Muzny D.M."/>
            <person name="Newsham I.F."/>
            <person name="Reese J.T."/>
            <person name="Robertson H.M."/>
            <person name="Robinson G.E."/>
            <person name="Rueppell O."/>
            <person name="Solovyev V."/>
            <person name="Stanke M."/>
            <person name="Stolle E."/>
            <person name="Tsuruda J.M."/>
            <person name="Vaerenbergh M.V."/>
            <person name="Waterhouse R.M."/>
            <person name="Weaver D.B."/>
            <person name="Whitfield C.W."/>
            <person name="Wu Y."/>
            <person name="Zdobnov E.M."/>
            <person name="Zhang L."/>
            <person name="Zhu D."/>
            <person name="Gibbs R.A."/>
        </authorList>
    </citation>
    <scope>NUCLEOTIDE SEQUENCE [LARGE SCALE GENOMIC DNA]</scope>
</reference>
<reference evidence="13" key="6">
    <citation type="submission" date="2024-08" db="UniProtKB">
        <authorList>
            <consortium name="RefSeq"/>
        </authorList>
    </citation>
    <scope>NUCLEOTIDE SEQUENCE [LARGE SCALE GENOMIC DNA]</scope>
    <source>
        <strain evidence="13">DH4</strain>
    </source>
</reference>
<reference evidence="9" key="7">
    <citation type="journal article" date="2005" name="Insect Biochem. Mol. Biol.">
        <title>Profiling the proteome complement of the secretion from hypopharyngeal gland of Africanized nurse-honeybees (Apis mellifera L.).</title>
        <authorList>
            <person name="Santos K.S."/>
            <person name="dos Santos L.D."/>
            <person name="Mendes M.A."/>
            <person name="de Souza B.M."/>
            <person name="Malaspina O."/>
            <person name="Palma M.S."/>
        </authorList>
    </citation>
    <scope>FUNCTION</scope>
    <scope>SUBCELLULAR LOCATION</scope>
    <scope>TISSUE SPECIFICITY</scope>
</reference>
<reference evidence="13" key="8">
    <citation type="journal article" date="2006" name="Genome Res.">
        <title>Evolution of the Yellow/Major Royal Jelly Protein family and the emergence of social behavior in honey bees.</title>
        <authorList>
            <person name="Drapeau M.D."/>
            <person name="Albert S."/>
            <person name="Kucharski R."/>
            <person name="Prusko C."/>
            <person name="Maleszka R."/>
        </authorList>
    </citation>
    <scope>IDENTIFICATION</scope>
</reference>
<reference evidence="9" key="9">
    <citation type="journal article" date="2018" name="Insects">
        <title>Transcriptional Control of Honey Bee (Apis mellifera) Major Royal Jelly Proteins by 20-Hydroxyecdysone.</title>
        <authorList>
            <person name="Winkler P."/>
            <person name="Sieg F."/>
            <person name="Buttstedt A."/>
        </authorList>
    </citation>
    <scope>TISSUE SPECIFICITY</scope>
    <scope>ABSENCE OF INDUCTION BY 20-HYDROXYECDYSONE</scope>
</reference>
<reference evidence="9" key="10">
    <citation type="journal article" date="2021" name="Insects">
        <title>Upregulation of Transferrin and Major Royal Jelly Proteins in the Spermathecal Fluid of Mated Honeybee (Apis mellifera) Queens.</title>
        <authorList>
            <person name="Park H.G."/>
            <person name="Kim B.Y."/>
            <person name="Kim J.M."/>
            <person name="Choi Y.S."/>
            <person name="Yoon H.J."/>
            <person name="Lee K.S."/>
            <person name="Jin B.R."/>
        </authorList>
    </citation>
    <scope>FUNCTION</scope>
    <scope>TISSUE SPECIFICITY</scope>
</reference>
<accession>A0A8U1C100</accession>
<accession>A0A8B6WYV7</accession>
<accession>Q6TGR0</accession>
<protein>
    <recommendedName>
        <fullName evidence="7">Major royal jelly protein 8</fullName>
    </recommendedName>
    <alternativeName>
        <fullName evidence="9">Bee-milk protein Mrjp8</fullName>
    </alternativeName>
</protein>
<gene>
    <name evidence="7 8 13" type="primary">Mrjp8</name>
    <name evidence="11" type="synonym">406067</name>
    <name type="synonym">GB14639</name>
</gene>
<comment type="function">
    <text evidence="3 4 6 9">Component of bee sting venom (PubMed:18573272). Component of royal jelly, a substance produced in the hypopharyngeal gland containing proteins, free amino acids, fatty acids, sugars and other nutrients, which is fed to developing larvae by worker nurse bees; may be present only at trace levels (PubMed:15607658). All larvae are fed some royal jelly (also known as worker jelly) early in their development but it forms the principal source of nutrition for larvae destined to become queen bees (Probable). Produced in the spermatheca of adult queen bees, along with other major royal jelly proteins, where it may act as a nutrient supply for sperm stored by mated queens, or be involved in energy metabolism (PubMed:34442256).</text>
</comment>
<comment type="subcellular location">
    <subcellularLocation>
        <location evidence="3 4">Secreted</location>
    </subcellularLocation>
    <text evidence="3 4">Minor component of royal jelly (PubMed:15607658). Component of bee sting venom (PubMed:18573272).</text>
</comment>
<comment type="tissue specificity">
    <text evidence="3 4 5 6">Expressed at very low levels in the hypopharyngeal glands of worker honey bees (at protein level) (PubMed:15607658). Secreted into bee venom in the sting apparatus (at protein level) (PubMed:18573272). Expressed in the spermatheca of adult queen bees (at protein level); expression levels are higher in mated queens than in virgin queens (PubMed:34442256). Along with Mrjp9 expressed at very low levels in the head of worker bees compared to other major royal jelly proteins (PubMed:30235865).</text>
</comment>
<comment type="induction">
    <text evidence="5">Unlike many other major royal jelly proteins, not down-regulated by the ecdysteroid 20-hydroxyecdysone (ecdysterone or 20E).</text>
</comment>
<comment type="similarity">
    <text evidence="9">Belongs to the major royal jelly protein family.</text>
</comment>
<evidence type="ECO:0000255" key="1"/>
<evidence type="ECO:0000255" key="2">
    <source>
        <dbReference type="PROSITE-ProRule" id="PRU00498"/>
    </source>
</evidence>
<evidence type="ECO:0000269" key="3">
    <source>
    </source>
</evidence>
<evidence type="ECO:0000269" key="4">
    <source>
    </source>
</evidence>
<evidence type="ECO:0000269" key="5">
    <source>
    </source>
</evidence>
<evidence type="ECO:0000269" key="6">
    <source>
    </source>
</evidence>
<evidence type="ECO:0000303" key="7">
    <source>
    </source>
</evidence>
<evidence type="ECO:0000303" key="8">
    <source>
    </source>
</evidence>
<evidence type="ECO:0000305" key="9"/>
<evidence type="ECO:0000312" key="10">
    <source>
        <dbReference type="EMBL" id="AAR83734.1"/>
    </source>
</evidence>
<evidence type="ECO:0000312" key="11">
    <source>
        <dbReference type="EnsemblMetazoa" id="NP_001011564"/>
    </source>
</evidence>
<evidence type="ECO:0000312" key="12">
    <source>
        <dbReference type="Proteomes" id="UP000005203"/>
    </source>
</evidence>
<evidence type="ECO:0000312" key="13">
    <source>
        <dbReference type="RefSeq" id="NP_001011564.1"/>
    </source>
</evidence>
<feature type="signal peptide" evidence="1">
    <location>
        <begin position="1"/>
        <end position="16"/>
    </location>
</feature>
<feature type="chain" id="PRO_5035544057" description="Major royal jelly protein 8" evidence="1">
    <location>
        <begin position="17"/>
        <end position="416"/>
    </location>
</feature>
<feature type="glycosylation site" description="N-linked (GlcNAc...) asparagine" evidence="2">
    <location>
        <position position="24"/>
    </location>
</feature>
<feature type="glycosylation site" description="N-linked (GlcNAc...) asparagine" evidence="2">
    <location>
        <position position="58"/>
    </location>
</feature>
<feature type="glycosylation site" description="N-linked (GlcNAc...) asparagine" evidence="2">
    <location>
        <position position="93"/>
    </location>
</feature>
<feature type="glycosylation site" description="N-linked (GlcNAc...) asparagine" evidence="2">
    <location>
        <position position="115"/>
    </location>
</feature>
<feature type="glycosylation site" description="N-linked (GlcNAc...) asparagine" evidence="2">
    <location>
        <position position="158"/>
    </location>
</feature>
<feature type="glycosylation site" description="N-linked (GlcNAc...) asparagine" evidence="2">
    <location>
        <position position="175"/>
    </location>
</feature>
<feature type="glycosylation site" description="N-linked (GlcNAc...) asparagine" evidence="2">
    <location>
        <position position="196"/>
    </location>
</feature>
<feature type="glycosylation site" description="N-linked (GlcNAc...) asparagine" evidence="2">
    <location>
        <position position="215"/>
    </location>
</feature>
<name>MRJP8_APIME</name>
<dbReference type="EMBL" id="AY398690">
    <property type="protein sequence ID" value="AAR83734.1"/>
    <property type="molecule type" value="mRNA"/>
</dbReference>
<dbReference type="RefSeq" id="NP_001011564.1">
    <property type="nucleotide sequence ID" value="NM_001011564.2"/>
</dbReference>
<dbReference type="RefSeq" id="XP_006558988.1">
    <property type="nucleotide sequence ID" value="XM_006558925.2"/>
</dbReference>
<dbReference type="RefSeq" id="XP_006558989.1">
    <property type="nucleotide sequence ID" value="XM_006558926.2"/>
</dbReference>
<dbReference type="SMR" id="A0A8U1C100"/>
<dbReference type="PaxDb" id="7460-GB55214-PA"/>
<dbReference type="EnsemblMetazoa" id="NM_001011564">
    <property type="protein sequence ID" value="NP_001011564"/>
    <property type="gene ID" value="GeneID_406067"/>
</dbReference>
<dbReference type="GeneID" id="406067"/>
<dbReference type="KEGG" id="ame:406067"/>
<dbReference type="CTD" id="406067"/>
<dbReference type="eggNOG" id="ENOG502SCJK">
    <property type="taxonomic scope" value="Eukaryota"/>
</dbReference>
<dbReference type="HOGENOM" id="CLU_031076_2_1_1"/>
<dbReference type="OMA" id="EWENASH"/>
<dbReference type="OrthoDB" id="3199782at2759"/>
<dbReference type="Proteomes" id="UP000005203">
    <property type="component" value="Linkage group LG11"/>
</dbReference>
<dbReference type="GO" id="GO:0005576">
    <property type="term" value="C:extracellular region"/>
    <property type="evidence" value="ECO:0007669"/>
    <property type="project" value="UniProtKB-SubCell"/>
</dbReference>
<dbReference type="Gene3D" id="2.120.10.30">
    <property type="entry name" value="TolB, C-terminal domain"/>
    <property type="match status" value="1"/>
</dbReference>
<dbReference type="InterPro" id="IPR011042">
    <property type="entry name" value="6-blade_b-propeller_TolB-like"/>
</dbReference>
<dbReference type="InterPro" id="IPR017996">
    <property type="entry name" value="Royal_jelly/protein_yellow"/>
</dbReference>
<dbReference type="PANTHER" id="PTHR10009:SF7">
    <property type="entry name" value="GH10609P-RELATED"/>
    <property type="match status" value="1"/>
</dbReference>
<dbReference type="PANTHER" id="PTHR10009">
    <property type="entry name" value="PROTEIN YELLOW-RELATED"/>
    <property type="match status" value="1"/>
</dbReference>
<dbReference type="Pfam" id="PF03022">
    <property type="entry name" value="MRJP"/>
    <property type="match status" value="1"/>
</dbReference>
<dbReference type="PRINTS" id="PR01366">
    <property type="entry name" value="ROYALJELLY"/>
</dbReference>
<dbReference type="SUPFAM" id="SSF101898">
    <property type="entry name" value="NHL repeat"/>
    <property type="match status" value="1"/>
</dbReference>